<sequence>MDDAVGDLKQALPCVAESPAVHVEVLQRSGSTAKKEDIKQSVYRLLKRHNIVFGDYVWTEFDEPFLTRNVQSVSIVDTELKAKDPQPIDLSACTIALHIFQLNEEGPSSENLDEETENIIAASHWVLPAAEFHGLWDSLVYDVEVKSHLLDYVMTTLLFSDKNVDSNLITWNRVVLLHGPPGTGKTSLCKALAQKLTIRLSSRYRYGQLIEINSHSLFSKWFSESGKLVTKMFQKIQDLIDDKEALVFVLIDEVESLTAARNACRAGAEPSDAIRVVNAVLTQIDQIKRHSNVVILTTSNITEKIDVAFVDRADIKQYIGPPSAAAIFKIYLSCLEELMKCQIIYPRQQLLTLRELEMIGFIENNVSKLSLLLSEISRKSEGLSGRVLRKLPFLAHALYIQAPSVTIEGFLQALSLAVDKQFEEKKKLSAHV</sequence>
<accession>Q5XHZ9</accession>
<feature type="chain" id="PRO_0000084784" description="Pachytene checkpoint protein 2 homolog">
    <location>
        <begin position="1"/>
        <end position="432"/>
    </location>
</feature>
<feature type="binding site" evidence="4">
    <location>
        <begin position="179"/>
        <end position="186"/>
    </location>
    <ligand>
        <name>ATP</name>
        <dbReference type="ChEBI" id="CHEBI:30616"/>
    </ligand>
</feature>
<feature type="modified residue" description="N-acetylmethionine" evidence="2">
    <location>
        <position position="1"/>
    </location>
</feature>
<keyword id="KW-0007">Acetylation</keyword>
<keyword id="KW-0067">ATP-binding</keyword>
<keyword id="KW-0221">Differentiation</keyword>
<keyword id="KW-0469">Meiosis</keyword>
<keyword id="KW-0547">Nucleotide-binding</keyword>
<keyword id="KW-0896">Oogenesis</keyword>
<keyword id="KW-1185">Reference proteome</keyword>
<keyword id="KW-0744">Spermatogenesis</keyword>
<evidence type="ECO:0000250" key="1"/>
<evidence type="ECO:0000250" key="2">
    <source>
        <dbReference type="UniProtKB" id="Q15645"/>
    </source>
</evidence>
<evidence type="ECO:0000250" key="3">
    <source>
        <dbReference type="UniProtKB" id="Q3UA06"/>
    </source>
</evidence>
<evidence type="ECO:0000255" key="4"/>
<evidence type="ECO:0000305" key="5"/>
<reference key="1">
    <citation type="journal article" date="2004" name="Genome Res.">
        <title>The status, quality, and expansion of the NIH full-length cDNA project: the Mammalian Gene Collection (MGC).</title>
        <authorList>
            <consortium name="The MGC Project Team"/>
        </authorList>
    </citation>
    <scope>NUCLEOTIDE SEQUENCE [LARGE SCALE MRNA]</scope>
    <source>
        <tissue>Testis</tissue>
    </source>
</reference>
<name>PCH2_RAT</name>
<dbReference type="EMBL" id="BC083900">
    <property type="protein sequence ID" value="AAH83900.1"/>
    <property type="molecule type" value="mRNA"/>
</dbReference>
<dbReference type="RefSeq" id="NP_001011930.1">
    <property type="nucleotide sequence ID" value="NM_001011930.1"/>
</dbReference>
<dbReference type="RefSeq" id="XP_008756903.1">
    <property type="nucleotide sequence ID" value="XM_008758681.3"/>
</dbReference>
<dbReference type="RefSeq" id="XP_038959281.1">
    <property type="nucleotide sequence ID" value="XM_039103353.2"/>
</dbReference>
<dbReference type="SMR" id="Q5XHZ9"/>
<dbReference type="FunCoup" id="Q5XHZ9">
    <property type="interactions" value="2110"/>
</dbReference>
<dbReference type="STRING" id="10116.ENSRNOP00000070709"/>
<dbReference type="PhosphoSitePlus" id="Q5XHZ9"/>
<dbReference type="jPOST" id="Q5XHZ9"/>
<dbReference type="PaxDb" id="10116-ENSRNOP00000021532"/>
<dbReference type="Ensembl" id="ENSRNOT00000021532.5">
    <property type="protein sequence ID" value="ENSRNOP00000021532.3"/>
    <property type="gene ID" value="ENSRNOG00000015810.6"/>
</dbReference>
<dbReference type="GeneID" id="292206"/>
<dbReference type="KEGG" id="rno:292206"/>
<dbReference type="UCSC" id="RGD:1308516">
    <property type="organism name" value="rat"/>
</dbReference>
<dbReference type="AGR" id="RGD:1308516"/>
<dbReference type="CTD" id="9319"/>
<dbReference type="RGD" id="1308516">
    <property type="gene designation" value="Trip13"/>
</dbReference>
<dbReference type="eggNOG" id="KOG0744">
    <property type="taxonomic scope" value="Eukaryota"/>
</dbReference>
<dbReference type="GeneTree" id="ENSGT00390000017432"/>
<dbReference type="InParanoid" id="Q5XHZ9"/>
<dbReference type="OMA" id="NVCDSVQ"/>
<dbReference type="OrthoDB" id="10042665at2759"/>
<dbReference type="PhylomeDB" id="Q5XHZ9"/>
<dbReference type="TreeFam" id="TF313507"/>
<dbReference type="PRO" id="PR:Q5XHZ9"/>
<dbReference type="Proteomes" id="UP000002494">
    <property type="component" value="Chromosome 1"/>
</dbReference>
<dbReference type="Bgee" id="ENSRNOG00000015810">
    <property type="expression patterns" value="Expressed in thymus and 18 other cell types or tissues"/>
</dbReference>
<dbReference type="GO" id="GO:0005694">
    <property type="term" value="C:chromosome"/>
    <property type="evidence" value="ECO:0000318"/>
    <property type="project" value="GO_Central"/>
</dbReference>
<dbReference type="GO" id="GO:0001673">
    <property type="term" value="C:male germ cell nucleus"/>
    <property type="evidence" value="ECO:0000266"/>
    <property type="project" value="RGD"/>
</dbReference>
<dbReference type="GO" id="GO:0005634">
    <property type="term" value="C:nucleus"/>
    <property type="evidence" value="ECO:0000318"/>
    <property type="project" value="GO_Central"/>
</dbReference>
<dbReference type="GO" id="GO:0005524">
    <property type="term" value="F:ATP binding"/>
    <property type="evidence" value="ECO:0007669"/>
    <property type="project" value="UniProtKB-KW"/>
</dbReference>
<dbReference type="GO" id="GO:0016887">
    <property type="term" value="F:ATP hydrolysis activity"/>
    <property type="evidence" value="ECO:0007669"/>
    <property type="project" value="InterPro"/>
</dbReference>
<dbReference type="GO" id="GO:0042802">
    <property type="term" value="F:identical protein binding"/>
    <property type="evidence" value="ECO:0000266"/>
    <property type="project" value="RGD"/>
</dbReference>
<dbReference type="GO" id="GO:0006302">
    <property type="term" value="P:double-strand break repair"/>
    <property type="evidence" value="ECO:0000250"/>
    <property type="project" value="UniProtKB"/>
</dbReference>
<dbReference type="GO" id="GO:0007144">
    <property type="term" value="P:female meiosis I"/>
    <property type="evidence" value="ECO:0000266"/>
    <property type="project" value="RGD"/>
</dbReference>
<dbReference type="GO" id="GO:0007141">
    <property type="term" value="P:male meiosis I"/>
    <property type="evidence" value="ECO:0000266"/>
    <property type="project" value="RGD"/>
</dbReference>
<dbReference type="GO" id="GO:0051598">
    <property type="term" value="P:meiotic recombination checkpoint signaling"/>
    <property type="evidence" value="ECO:0000318"/>
    <property type="project" value="GO_Central"/>
</dbReference>
<dbReference type="GO" id="GO:0007094">
    <property type="term" value="P:mitotic spindle assembly checkpoint signaling"/>
    <property type="evidence" value="ECO:0000250"/>
    <property type="project" value="UniProtKB"/>
</dbReference>
<dbReference type="GO" id="GO:0001556">
    <property type="term" value="P:oocyte maturation"/>
    <property type="evidence" value="ECO:0000266"/>
    <property type="project" value="RGD"/>
</dbReference>
<dbReference type="GO" id="GO:0048477">
    <property type="term" value="P:oogenesis"/>
    <property type="evidence" value="ECO:0000250"/>
    <property type="project" value="UniProtKB"/>
</dbReference>
<dbReference type="GO" id="GO:0007131">
    <property type="term" value="P:reciprocal meiotic recombination"/>
    <property type="evidence" value="ECO:0000250"/>
    <property type="project" value="UniProtKB"/>
</dbReference>
<dbReference type="GO" id="GO:0007286">
    <property type="term" value="P:spermatid development"/>
    <property type="evidence" value="ECO:0000266"/>
    <property type="project" value="RGD"/>
</dbReference>
<dbReference type="GO" id="GO:0007283">
    <property type="term" value="P:spermatogenesis"/>
    <property type="evidence" value="ECO:0000250"/>
    <property type="project" value="UniProtKB"/>
</dbReference>
<dbReference type="GO" id="GO:0007130">
    <property type="term" value="P:synaptonemal complex assembly"/>
    <property type="evidence" value="ECO:0000250"/>
    <property type="project" value="UniProtKB"/>
</dbReference>
<dbReference type="CDD" id="cd19508">
    <property type="entry name" value="RecA-like_Pch2-like"/>
    <property type="match status" value="1"/>
</dbReference>
<dbReference type="FunFam" id="3.40.50.300:FF:000662">
    <property type="entry name" value="Pachytene checkpoint protein 2 homolog"/>
    <property type="match status" value="1"/>
</dbReference>
<dbReference type="Gene3D" id="3.40.50.300">
    <property type="entry name" value="P-loop containing nucleotide triphosphate hydrolases"/>
    <property type="match status" value="1"/>
</dbReference>
<dbReference type="InterPro" id="IPR003593">
    <property type="entry name" value="AAA+_ATPase"/>
</dbReference>
<dbReference type="InterPro" id="IPR003959">
    <property type="entry name" value="ATPase_AAA_core"/>
</dbReference>
<dbReference type="InterPro" id="IPR003960">
    <property type="entry name" value="ATPase_AAA_CS"/>
</dbReference>
<dbReference type="InterPro" id="IPR001270">
    <property type="entry name" value="ClpA/B"/>
</dbReference>
<dbReference type="InterPro" id="IPR027417">
    <property type="entry name" value="P-loop_NTPase"/>
</dbReference>
<dbReference type="InterPro" id="IPR044539">
    <property type="entry name" value="Pch2-like"/>
</dbReference>
<dbReference type="PANTHER" id="PTHR45991">
    <property type="entry name" value="PACHYTENE CHECKPOINT PROTEIN 2"/>
    <property type="match status" value="1"/>
</dbReference>
<dbReference type="PANTHER" id="PTHR45991:SF1">
    <property type="entry name" value="PACHYTENE CHECKPOINT PROTEIN 2 HOMOLOG"/>
    <property type="match status" value="1"/>
</dbReference>
<dbReference type="Pfam" id="PF00004">
    <property type="entry name" value="AAA"/>
    <property type="match status" value="1"/>
</dbReference>
<dbReference type="Pfam" id="PF23242">
    <property type="entry name" value="AAA_lid_TRIP13_C"/>
    <property type="match status" value="1"/>
</dbReference>
<dbReference type="Pfam" id="PF23563">
    <property type="entry name" value="TRIP13_N"/>
    <property type="match status" value="1"/>
</dbReference>
<dbReference type="PRINTS" id="PR00300">
    <property type="entry name" value="CLPPROTEASEA"/>
</dbReference>
<dbReference type="SMART" id="SM00382">
    <property type="entry name" value="AAA"/>
    <property type="match status" value="1"/>
</dbReference>
<dbReference type="SUPFAM" id="SSF52540">
    <property type="entry name" value="P-loop containing nucleoside triphosphate hydrolases"/>
    <property type="match status" value="1"/>
</dbReference>
<dbReference type="PROSITE" id="PS00674">
    <property type="entry name" value="AAA"/>
    <property type="match status" value="1"/>
</dbReference>
<protein>
    <recommendedName>
        <fullName>Pachytene checkpoint protein 2 homolog</fullName>
    </recommendedName>
    <alternativeName>
        <fullName>Thyroid hormone receptor interactor 13</fullName>
    </alternativeName>
    <alternativeName>
        <fullName>Thyroid receptor-interacting protein 13</fullName>
        <shortName>TR-interacting protein 13</shortName>
        <shortName>TRIP-13</shortName>
    </alternativeName>
</protein>
<gene>
    <name type="primary">Trip13</name>
    <name type="synonym">Pch2</name>
</gene>
<comment type="function">
    <text evidence="2 3">Plays a key role in chromosome recombination and chromosome structure development during meiosis. Required at early steps in meiotic recombination that leads to non-crossovers pathways. Also needed for efficient completion of homologous synapsis by influencing crossover distribution along the chromosomes affecting both crossovers and non-crossovers pathways. Also required for development of higher-order chromosome structures and is needed for synaptonemal-complex formation. In males, required for efficient synapsis of the sex chromosomes and for sex body formation. Promotes early steps of the DNA double-strand breaks (DSBs) repair process upstream of the assembly of RAD51 complexes. Required for depletion of HORMAD1 and HORMAD2 from synapsed chromosomes. Plays a role in mitotic spindle assembly checkpoint (SAC) activation (By similarity).</text>
</comment>
<comment type="subunit">
    <text evidence="1 3">Specifically interacts with the ligand binding domain of the thyroid receptor (TR). This interaction does not require the presence of thyroid hormone for its interaction (By similarity). Interacts with proteasome subunit PSMA8; to participate in meiosis progression during spermatogenesis (By similarity).</text>
</comment>
<comment type="similarity">
    <text evidence="5">Belongs to the AAA ATPase family. PCH2 subfamily.</text>
</comment>
<organism>
    <name type="scientific">Rattus norvegicus</name>
    <name type="common">Rat</name>
    <dbReference type="NCBI Taxonomy" id="10116"/>
    <lineage>
        <taxon>Eukaryota</taxon>
        <taxon>Metazoa</taxon>
        <taxon>Chordata</taxon>
        <taxon>Craniata</taxon>
        <taxon>Vertebrata</taxon>
        <taxon>Euteleostomi</taxon>
        <taxon>Mammalia</taxon>
        <taxon>Eutheria</taxon>
        <taxon>Euarchontoglires</taxon>
        <taxon>Glires</taxon>
        <taxon>Rodentia</taxon>
        <taxon>Myomorpha</taxon>
        <taxon>Muroidea</taxon>
        <taxon>Muridae</taxon>
        <taxon>Murinae</taxon>
        <taxon>Rattus</taxon>
    </lineage>
</organism>
<proteinExistence type="evidence at transcript level"/>